<sequence>MSRPLVITEGMMIGVLLMLAPINALLLGFVQSTPDNNKTVREFNVYWNVPTFMCHKYGLRFEEVSEKYGILQNWMDKFRGEEIAILYDPGMFPALLKDPNGNVVARNGGVPQLGNLTKHLQVFRDHLINQIPDKSFPGVGVIDFESWRPIFRQNWASLQPYKKLSVEVVRREHPFWDDQRVEQEAKRRFEKYGQLFMEETLKAAKRMRPAANWGYYAYPYCYNLTPNQPSAQCEATTMQENDKMSWLFESEDVLLPSVYLRWNLTSGERVGLVGGRVKEALRIARQMTTSRKKVLPYYWYKYQDRRDTDLSRADLEATLRKITDLGADGFIIWGSSDDINTKAKCLQFREYLNNELGPAVKRIALNNNANDRLTVDVSVDQV</sequence>
<protein>
    <recommendedName>
        <fullName>Hyaluronidase</fullName>
        <shortName>Hya</shortName>
        <ecNumber>3.2.1.35</ecNumber>
    </recommendedName>
    <alternativeName>
        <fullName>Allergen Api m II</fullName>
    </alternativeName>
    <alternativeName>
        <fullName>Hyaluronoglucosaminidase</fullName>
    </alternativeName>
    <allergenName>Api m 2</allergenName>
</protein>
<organism>
    <name type="scientific">Apis mellifera</name>
    <name type="common">Honeybee</name>
    <dbReference type="NCBI Taxonomy" id="7460"/>
    <lineage>
        <taxon>Eukaryota</taxon>
        <taxon>Metazoa</taxon>
        <taxon>Ecdysozoa</taxon>
        <taxon>Arthropoda</taxon>
        <taxon>Hexapoda</taxon>
        <taxon>Insecta</taxon>
        <taxon>Pterygota</taxon>
        <taxon>Neoptera</taxon>
        <taxon>Endopterygota</taxon>
        <taxon>Hymenoptera</taxon>
        <taxon>Apocrita</taxon>
        <taxon>Aculeata</taxon>
        <taxon>Apoidea</taxon>
        <taxon>Anthophila</taxon>
        <taxon>Apidae</taxon>
        <taxon>Apis</taxon>
    </lineage>
</organism>
<accession>Q08169</accession>
<evidence type="ECO:0000250" key="1"/>
<evidence type="ECO:0000255" key="2"/>
<evidence type="ECO:0000269" key="3">
    <source>
    </source>
</evidence>
<evidence type="ECO:0000269" key="4">
    <source>
    </source>
</evidence>
<evidence type="ECO:0000269" key="5">
    <source>
    </source>
</evidence>
<evidence type="ECO:0000305" key="6"/>
<evidence type="ECO:0000305" key="7">
    <source>
    </source>
</evidence>
<evidence type="ECO:0007829" key="8">
    <source>
        <dbReference type="PDB" id="1FCQ"/>
    </source>
</evidence>
<evidence type="ECO:0007829" key="9">
    <source>
        <dbReference type="PDB" id="1FCU"/>
    </source>
</evidence>
<evidence type="ECO:0007829" key="10">
    <source>
        <dbReference type="PDB" id="2J88"/>
    </source>
</evidence>
<comment type="function">
    <text evidence="1">Hydrolyzes high molecular weight hyaluronic acid to produce small oligosaccharides.</text>
</comment>
<comment type="catalytic activity">
    <reaction>
        <text>Random hydrolysis of (1-&gt;4)-linkages between N-acetyl-beta-D-glucosamine and D-glucuronate residues in hyaluronate.</text>
        <dbReference type="EC" id="3.2.1.35"/>
    </reaction>
</comment>
<comment type="subunit">
    <text>Homotetramer.</text>
</comment>
<comment type="subcellular location">
    <subcellularLocation>
        <location>Secreted</location>
    </subcellularLocation>
</comment>
<comment type="tissue specificity">
    <text>Expressed in the venom glands of worker bees. It is also detected in the testes of drones but not in the queen-bee venom glands or in pupae.</text>
</comment>
<comment type="PTM">
    <text evidence="3 5">N-glycosylated. Glycans found include a majority of small oligosaccharides (Man1-3GlcNAc2), most of which are either alpha 1,3-monofucosylated or alpha 1,3-(alpha 1,6-)difucosylated at the innermost GlcNAc residue, approximately 5% of high-mannose type structures, and 8% contains the terminal trisaccharide GalNAc beta 1-4[Fuc alpha 1-3]GlcNAc beta 1-in beta 1,2-linkage to the core alpha 1,3-mannosyl residue.</text>
</comment>
<comment type="allergen">
    <text>Causes an allergic reaction in human.</text>
</comment>
<comment type="similarity">
    <text evidence="6">Belongs to the glycosyl hydrolase 56 family.</text>
</comment>
<feature type="signal peptide" description="Or 24" evidence="2">
    <location>
        <begin position="1"/>
        <end position="28"/>
    </location>
</feature>
<feature type="propeptide" id="PRO_0000012105" evidence="2">
    <location>
        <begin position="29"/>
        <end position="33"/>
    </location>
</feature>
<feature type="chain" id="PRO_0000012106" description="Hyaluronidase">
    <location>
        <begin position="34"/>
        <end position="382"/>
    </location>
</feature>
<feature type="active site" description="Proton donor" evidence="7">
    <location>
        <position position="145"/>
    </location>
</feature>
<feature type="glycosylation site" description="N-linked (GlcNAc...) asparagine" evidence="2">
    <location>
        <position position="115"/>
    </location>
</feature>
<feature type="glycosylation site" description="N-linked (GlcNAc...) (complex) asparagine" evidence="3">
    <location>
        <position position="263"/>
    </location>
</feature>
<feature type="disulfide bond" evidence="4">
    <location>
        <begin position="54"/>
        <end position="345"/>
    </location>
</feature>
<feature type="disulfide bond" evidence="4">
    <location>
        <begin position="221"/>
        <end position="233"/>
    </location>
</feature>
<feature type="sequence variant" description="In clone HYA-2.">
    <original>D</original>
    <variation>S</variation>
    <location>
        <position position="371"/>
    </location>
</feature>
<feature type="sequence conflict" description="In Ref. 2; AA sequence." evidence="6" ref="2">
    <original>N</original>
    <variation>D</variation>
    <location>
        <position position="37"/>
    </location>
</feature>
<feature type="strand" evidence="8">
    <location>
        <begin position="44"/>
        <end position="49"/>
    </location>
</feature>
<feature type="helix" evidence="8">
    <location>
        <begin position="51"/>
        <end position="57"/>
    </location>
</feature>
<feature type="helix" evidence="8">
    <location>
        <begin position="63"/>
        <end position="66"/>
    </location>
</feature>
<feature type="helix" evidence="8">
    <location>
        <begin position="74"/>
        <end position="76"/>
    </location>
</feature>
<feature type="strand" evidence="8">
    <location>
        <begin position="78"/>
        <end position="88"/>
    </location>
</feature>
<feature type="strand" evidence="9">
    <location>
        <begin position="94"/>
        <end position="97"/>
    </location>
</feature>
<feature type="strand" evidence="9">
    <location>
        <begin position="103"/>
        <end position="106"/>
    </location>
</feature>
<feature type="helix" evidence="8">
    <location>
        <begin position="111"/>
        <end position="113"/>
    </location>
</feature>
<feature type="helix" evidence="8">
    <location>
        <begin position="116"/>
        <end position="130"/>
    </location>
</feature>
<feature type="strand" evidence="8">
    <location>
        <begin position="138"/>
        <end position="143"/>
    </location>
</feature>
<feature type="helix" evidence="8">
    <location>
        <begin position="151"/>
        <end position="153"/>
    </location>
</feature>
<feature type="helix" evidence="8">
    <location>
        <begin position="156"/>
        <end position="158"/>
    </location>
</feature>
<feature type="helix" evidence="8">
    <location>
        <begin position="159"/>
        <end position="172"/>
    </location>
</feature>
<feature type="helix" evidence="8">
    <location>
        <begin position="178"/>
        <end position="207"/>
    </location>
</feature>
<feature type="strand" evidence="8">
    <location>
        <begin position="211"/>
        <end position="216"/>
    </location>
</feature>
<feature type="strand" evidence="8">
    <location>
        <begin position="225"/>
        <end position="227"/>
    </location>
</feature>
<feature type="strand" evidence="8">
    <location>
        <begin position="230"/>
        <end position="232"/>
    </location>
</feature>
<feature type="helix" evidence="8">
    <location>
        <begin position="235"/>
        <end position="242"/>
    </location>
</feature>
<feature type="helix" evidence="8">
    <location>
        <begin position="245"/>
        <end position="248"/>
    </location>
</feature>
<feature type="strand" evidence="8">
    <location>
        <begin position="252"/>
        <end position="255"/>
    </location>
</feature>
<feature type="strand" evidence="8">
    <location>
        <begin position="262"/>
        <end position="264"/>
    </location>
</feature>
<feature type="helix" evidence="8">
    <location>
        <begin position="266"/>
        <end position="286"/>
    </location>
</feature>
<feature type="strand" evidence="10">
    <location>
        <begin position="288"/>
        <end position="290"/>
    </location>
</feature>
<feature type="strand" evidence="8">
    <location>
        <begin position="297"/>
        <end position="302"/>
    </location>
</feature>
<feature type="strand" evidence="8">
    <location>
        <begin position="305"/>
        <end position="309"/>
    </location>
</feature>
<feature type="helix" evidence="8">
    <location>
        <begin position="312"/>
        <end position="324"/>
    </location>
</feature>
<feature type="strand" evidence="8">
    <location>
        <begin position="328"/>
        <end position="333"/>
    </location>
</feature>
<feature type="helix" evidence="8">
    <location>
        <begin position="336"/>
        <end position="338"/>
    </location>
</feature>
<feature type="strand" evidence="8">
    <location>
        <begin position="339"/>
        <end position="341"/>
    </location>
</feature>
<feature type="helix" evidence="8">
    <location>
        <begin position="342"/>
        <end position="354"/>
    </location>
</feature>
<feature type="helix" evidence="8">
    <location>
        <begin position="356"/>
        <end position="361"/>
    </location>
</feature>
<name>HUGA_APIME</name>
<proteinExistence type="evidence at protein level"/>
<dbReference type="EC" id="3.2.1.35"/>
<dbReference type="EMBL" id="L10710">
    <property type="protein sequence ID" value="AAA27730.1"/>
    <property type="molecule type" value="mRNA"/>
</dbReference>
<dbReference type="PIR" id="A47477">
    <property type="entry name" value="A47477"/>
</dbReference>
<dbReference type="RefSeq" id="NP_001011619.1">
    <property type="nucleotide sequence ID" value="NM_001011619.1"/>
</dbReference>
<dbReference type="PDB" id="1FCQ">
    <property type="method" value="X-ray"/>
    <property type="resolution" value="1.60 A"/>
    <property type="chains" value="A=33-382"/>
</dbReference>
<dbReference type="PDB" id="1FCU">
    <property type="method" value="X-ray"/>
    <property type="resolution" value="2.10 A"/>
    <property type="chains" value="A=33-382"/>
</dbReference>
<dbReference type="PDB" id="1FCV">
    <property type="method" value="X-ray"/>
    <property type="resolution" value="2.65 A"/>
    <property type="chains" value="A=33-382"/>
</dbReference>
<dbReference type="PDB" id="2J88">
    <property type="method" value="X-ray"/>
    <property type="resolution" value="2.60 A"/>
    <property type="chains" value="A=33-382"/>
</dbReference>
<dbReference type="PDBsum" id="1FCQ"/>
<dbReference type="PDBsum" id="1FCU"/>
<dbReference type="PDBsum" id="1FCV"/>
<dbReference type="PDBsum" id="2J88"/>
<dbReference type="SMR" id="Q08169"/>
<dbReference type="STRING" id="7460.Q08169"/>
<dbReference type="Allergome" id="2493">
    <property type="allergen name" value="Api m A1-A2"/>
</dbReference>
<dbReference type="Allergome" id="2778">
    <property type="allergen name" value="Api m A1-A2-A3"/>
</dbReference>
<dbReference type="Allergome" id="3089">
    <property type="allergen name" value="Api m 2.0101"/>
</dbReference>
<dbReference type="Allergome" id="46">
    <property type="allergen name" value="Api m 2"/>
</dbReference>
<dbReference type="CAZy" id="GH56">
    <property type="family name" value="Glycoside Hydrolase Family 56"/>
</dbReference>
<dbReference type="GlyConnect" id="224">
    <property type="glycosylation" value="17 N-Linked glycans"/>
</dbReference>
<dbReference type="iPTMnet" id="Q08169"/>
<dbReference type="PaxDb" id="7460-GB52775-PA"/>
<dbReference type="ABCD" id="Q08169">
    <property type="antibodies" value="1 sequenced antibody"/>
</dbReference>
<dbReference type="EnsemblMetazoa" id="NM_001011619">
    <property type="protein sequence ID" value="NP_001011619"/>
    <property type="gene ID" value="LOC406146"/>
</dbReference>
<dbReference type="GeneID" id="406146"/>
<dbReference type="KEGG" id="ame:406146"/>
<dbReference type="eggNOG" id="ENOG502QTUU">
    <property type="taxonomic scope" value="Eukaryota"/>
</dbReference>
<dbReference type="InParanoid" id="Q08169"/>
<dbReference type="OrthoDB" id="5796153at2759"/>
<dbReference type="PhylomeDB" id="Q08169"/>
<dbReference type="BRENDA" id="3.2.1.35">
    <property type="organism ID" value="387"/>
</dbReference>
<dbReference type="EvolutionaryTrace" id="Q08169"/>
<dbReference type="Proteomes" id="UP000005203">
    <property type="component" value="Linkage group LG14"/>
</dbReference>
<dbReference type="GO" id="GO:0005576">
    <property type="term" value="C:extracellular region"/>
    <property type="evidence" value="ECO:0007669"/>
    <property type="project" value="UniProtKB-SubCell"/>
</dbReference>
<dbReference type="GO" id="GO:0004415">
    <property type="term" value="F:hyalurononglucosaminidase activity"/>
    <property type="evidence" value="ECO:0007669"/>
    <property type="project" value="UniProtKB-EC"/>
</dbReference>
<dbReference type="GO" id="GO:0005975">
    <property type="term" value="P:carbohydrate metabolic process"/>
    <property type="evidence" value="ECO:0007669"/>
    <property type="project" value="InterPro"/>
</dbReference>
<dbReference type="GO" id="GO:0006952">
    <property type="term" value="P:defense response"/>
    <property type="evidence" value="ECO:0007669"/>
    <property type="project" value="InterPro"/>
</dbReference>
<dbReference type="GO" id="GO:0030214">
    <property type="term" value="P:hyaluronan catabolic process"/>
    <property type="evidence" value="ECO:0007669"/>
    <property type="project" value="TreeGrafter"/>
</dbReference>
<dbReference type="Gene3D" id="3.20.20.70">
    <property type="entry name" value="Aldolase class I"/>
    <property type="match status" value="1"/>
</dbReference>
<dbReference type="InterPro" id="IPR013785">
    <property type="entry name" value="Aldolase_TIM"/>
</dbReference>
<dbReference type="InterPro" id="IPR017853">
    <property type="entry name" value="Glycoside_hydrolase_SF"/>
</dbReference>
<dbReference type="InterPro" id="IPR018155">
    <property type="entry name" value="Hyaluronidase"/>
</dbReference>
<dbReference type="InterPro" id="IPR001329">
    <property type="entry name" value="Venom_Hyaluronidase"/>
</dbReference>
<dbReference type="PANTHER" id="PTHR11769">
    <property type="entry name" value="HYALURONIDASE"/>
    <property type="match status" value="1"/>
</dbReference>
<dbReference type="PANTHER" id="PTHR11769:SF35">
    <property type="entry name" value="HYALURONIDASE"/>
    <property type="match status" value="1"/>
</dbReference>
<dbReference type="Pfam" id="PF01630">
    <property type="entry name" value="Glyco_hydro_56"/>
    <property type="match status" value="1"/>
</dbReference>
<dbReference type="PIRSF" id="PIRSF038193">
    <property type="entry name" value="Hyaluronidase"/>
    <property type="match status" value="1"/>
</dbReference>
<dbReference type="PRINTS" id="PR00846">
    <property type="entry name" value="GLHYDRLASE56"/>
</dbReference>
<dbReference type="PRINTS" id="PR00847">
    <property type="entry name" value="HYALURONDASE"/>
</dbReference>
<dbReference type="SUPFAM" id="SSF51445">
    <property type="entry name" value="(Trans)glycosidases"/>
    <property type="match status" value="1"/>
</dbReference>
<reference key="1">
    <citation type="journal article" date="1993" name="Proc. Natl. Acad. Sci. U.S.A.">
        <title>Bee venom hyaluronidase is homologous to a membrane protein of mammalian sperm.</title>
        <authorList>
            <person name="Gmachl M."/>
            <person name="Kreil G."/>
        </authorList>
    </citation>
    <scope>NUCLEOTIDE SEQUENCE [MRNA]</scope>
    <source>
        <tissue>Venom gland</tissue>
    </source>
</reference>
<reference key="2">
    <citation type="journal article" date="1991" name="J. Allergy Clin. Immunol.">
        <title>The cross-reactivity between bee and vespid hyaluronidases has a structural basis.</title>
        <authorList>
            <person name="Jacobson R.S."/>
            <person name="Hoffman D.R."/>
            <person name="Kemeny D.M."/>
        </authorList>
    </citation>
    <scope>PROTEIN SEQUENCE OF 34-64</scope>
    <source>
        <tissue>Venom</tissue>
    </source>
</reference>
<reference key="3">
    <citation type="journal article" date="1995" name="Glycoconj. J.">
        <title>The asparagine-linked carbohydrate of honeybee venom hyaluronidase.</title>
        <authorList>
            <person name="Kubelka V."/>
            <person name="Altmann F."/>
            <person name="Marz L."/>
        </authorList>
    </citation>
    <scope>GLYCOSYLATION</scope>
</reference>
<reference key="4">
    <citation type="journal article" date="2000" name="Anal. Biochem.">
        <title>N-glycan analysis by matrix-assisted laser desorption/ionization mass spectrometry of electrophoretically separated nonmammalian proteins: application to peanut allergen Ara h 1 and olive pollen allergen Ole e 1.</title>
        <authorList>
            <person name="Kolarich D."/>
            <person name="Altmann F."/>
        </authorList>
    </citation>
    <scope>GLYCOSYLATION AT ASN-263</scope>
</reference>
<reference key="5">
    <citation type="journal article" date="2000" name="Structure">
        <title>Crystal structure of hyaluronidase, a major allergen of bee venom.</title>
        <authorList>
            <person name="Markovic-Housley Z."/>
            <person name="Miglierini G."/>
            <person name="Soldatova L."/>
            <person name="Rizkallah P.J."/>
            <person name="Mueller U."/>
            <person name="Schirmer T."/>
        </authorList>
    </citation>
    <scope>X-RAY CRYSTALLOGRAPHY (1.6 ANGSTROMS) OF 42-362</scope>
    <scope>ACTIVE SITE</scope>
    <scope>DISULFIDE BONDS</scope>
</reference>
<keyword id="KW-0002">3D-structure</keyword>
<keyword id="KW-0020">Allergen</keyword>
<keyword id="KW-0903">Direct protein sequencing</keyword>
<keyword id="KW-1015">Disulfide bond</keyword>
<keyword id="KW-0325">Glycoprotein</keyword>
<keyword id="KW-0326">Glycosidase</keyword>
<keyword id="KW-0378">Hydrolase</keyword>
<keyword id="KW-1185">Reference proteome</keyword>
<keyword id="KW-0964">Secreted</keyword>
<keyword id="KW-0732">Signal</keyword>
<keyword id="KW-0865">Zymogen</keyword>